<sequence length="264" mass="27942">MHFAALAILSSLVASAAAHTRVWGVWVNGVDQGDGRDIYIRSPPTNDPVVNLTDPAMACNVDNRVVPQWVSVKSNDSLTFEWYHNTRDDDIIASSHHGPIAVYVAPAASNGSGPVWVKIFDDTYTTSWAVDRLITAHGQHTVIVPDIPAGDYLFRAEINALHQADVLYDQDPLRGAQFYISCAQITITPGGDETLPAGIALPGAYTDSTPGIVWNLYNGSDPTEYVAPGPPVWTDALGGSIALVGIPVLPNTTSSAGVAPTGAA</sequence>
<feature type="signal peptide" evidence="4">
    <location>
        <begin position="1"/>
        <end position="18"/>
    </location>
</feature>
<feature type="chain" id="PRO_5003884847" description="AA9 family lytic polysaccharide monooxygenase A">
    <location>
        <begin position="19"/>
        <end position="264"/>
    </location>
</feature>
<feature type="binding site" evidence="1">
    <location>
        <position position="19"/>
    </location>
    <ligand>
        <name>Cu(2+)</name>
        <dbReference type="ChEBI" id="CHEBI:29036"/>
        <note>catalytic</note>
    </ligand>
</feature>
<feature type="binding site" evidence="1">
    <location>
        <position position="96"/>
    </location>
    <ligand>
        <name>Cu(2+)</name>
        <dbReference type="ChEBI" id="CHEBI:29036"/>
        <note>catalytic</note>
    </ligand>
</feature>
<feature type="binding site" evidence="2">
    <location>
        <position position="162"/>
    </location>
    <ligand>
        <name>O2</name>
        <dbReference type="ChEBI" id="CHEBI:15379"/>
    </ligand>
</feature>
<feature type="binding site" evidence="1">
    <location>
        <position position="179"/>
    </location>
    <ligand>
        <name>Cu(2+)</name>
        <dbReference type="ChEBI" id="CHEBI:29036"/>
        <note>catalytic</note>
    </ligand>
</feature>
<feature type="glycosylation site" description="N-linked (GlcNAc...) asparagine" evidence="5">
    <location>
        <position position="51"/>
    </location>
</feature>
<feature type="glycosylation site" description="N-linked (GlcNAc...) asparagine" evidence="5">
    <location>
        <position position="75"/>
    </location>
</feature>
<feature type="glycosylation site" description="N-linked (GlcNAc...) asparagine" evidence="5">
    <location>
        <position position="110"/>
    </location>
</feature>
<feature type="glycosylation site" description="N-linked (GlcNAc...) asparagine" evidence="5">
    <location>
        <position position="218"/>
    </location>
</feature>
<feature type="glycosylation site" description="N-linked (GlcNAc...) asparagine" evidence="5">
    <location>
        <position position="251"/>
    </location>
</feature>
<feature type="disulfide bond" evidence="1">
    <location>
        <begin position="59"/>
        <end position="182"/>
    </location>
</feature>
<proteinExistence type="evidence at protein level"/>
<name>LP9A_PHACS</name>
<reference key="1">
    <citation type="journal article" date="2012" name="BMC Genomics">
        <title>Comparative genomics of the white-rot fungi, Phanerochaete carnosa and P. chrysosporium, to elucidate the genetic basis of the distinct wood types they colonize.</title>
        <authorList>
            <person name="Suzuki H."/>
            <person name="MacDonald J."/>
            <person name="Syed K."/>
            <person name="Salamov A."/>
            <person name="Hori C."/>
            <person name="Aerts A."/>
            <person name="Henrissat B."/>
            <person name="Wiebenga A."/>
            <person name="vanKuyk P.A."/>
            <person name="Barry K."/>
            <person name="Lindquist E."/>
            <person name="LaButti K."/>
            <person name="Lapidus A."/>
            <person name="Lucas S."/>
            <person name="Coutinho P."/>
            <person name="Gong Y."/>
            <person name="Samejima M."/>
            <person name="Mahadevan R."/>
            <person name="Abou-Zaid M."/>
            <person name="de Vries R.P."/>
            <person name="Igarashi K."/>
            <person name="Yadav J.S."/>
            <person name="Grigoriev I.V."/>
            <person name="Master E.R."/>
        </authorList>
    </citation>
    <scope>NUCLEOTIDE SEQUENCE [LARGE SCALE GENOMIC DNA]</scope>
    <source>
        <strain>HHB-10118-sp</strain>
    </source>
</reference>
<reference key="2">
    <citation type="journal article" date="2021" name="J. Biol. Chem.">
        <title>Identification of the molecular determinants driving the substrate specificity of fungal lytic polysaccharide monooxygenases (LPMOs).</title>
        <authorList>
            <person name="Frandsen K.E.H."/>
            <person name="Haon M."/>
            <person name="Grisel S."/>
            <person name="Henrissat B."/>
            <person name="Lo Leggio L."/>
            <person name="Berrin J.G."/>
        </authorList>
    </citation>
    <scope>FUNCTION</scope>
    <scope>CATALYTIC ACTIVITY</scope>
    <scope>SUBSTRATE SPECIFICITY</scope>
</reference>
<organism>
    <name type="scientific">Phanerochaete carnosa (strain HHB-10118-sp)</name>
    <name type="common">White-rot fungus</name>
    <name type="synonym">Peniophora carnosa</name>
    <dbReference type="NCBI Taxonomy" id="650164"/>
    <lineage>
        <taxon>Eukaryota</taxon>
        <taxon>Fungi</taxon>
        <taxon>Dikarya</taxon>
        <taxon>Basidiomycota</taxon>
        <taxon>Agaricomycotina</taxon>
        <taxon>Agaricomycetes</taxon>
        <taxon>Polyporales</taxon>
        <taxon>Phanerochaetaceae</taxon>
        <taxon>Phanerochaete</taxon>
    </lineage>
</organism>
<keyword id="KW-0119">Carbohydrate metabolism</keyword>
<keyword id="KW-0136">Cellulose degradation</keyword>
<keyword id="KW-0186">Copper</keyword>
<keyword id="KW-1015">Disulfide bond</keyword>
<keyword id="KW-0325">Glycoprotein</keyword>
<keyword id="KW-0479">Metal-binding</keyword>
<keyword id="KW-0503">Monooxygenase</keyword>
<keyword id="KW-0560">Oxidoreductase</keyword>
<keyword id="KW-0624">Polysaccharide degradation</keyword>
<keyword id="KW-1185">Reference proteome</keyword>
<keyword id="KW-0964">Secreted</keyword>
<keyword id="KW-0732">Signal</keyword>
<dbReference type="EC" id="1.14.99.56" evidence="6"/>
<dbReference type="EMBL" id="JH930475">
    <property type="protein sequence ID" value="EKM52808.1"/>
    <property type="molecule type" value="Genomic_DNA"/>
</dbReference>
<dbReference type="RefSeq" id="XP_007399138.1">
    <property type="nucleotide sequence ID" value="XM_007399076.1"/>
</dbReference>
<dbReference type="SMR" id="K5VN09"/>
<dbReference type="STRING" id="650164.K5VN09"/>
<dbReference type="GeneID" id="18917992"/>
<dbReference type="KEGG" id="pco:PHACADRAFT_261448"/>
<dbReference type="HOGENOM" id="CLU_031730_0_0_1"/>
<dbReference type="InParanoid" id="K5VN09"/>
<dbReference type="OrthoDB" id="4849160at2759"/>
<dbReference type="Proteomes" id="UP000008370">
    <property type="component" value="Unassembled WGS sequence"/>
</dbReference>
<dbReference type="GO" id="GO:0005576">
    <property type="term" value="C:extracellular region"/>
    <property type="evidence" value="ECO:0007669"/>
    <property type="project" value="UniProtKB-SubCell"/>
</dbReference>
<dbReference type="GO" id="GO:0046872">
    <property type="term" value="F:metal ion binding"/>
    <property type="evidence" value="ECO:0007669"/>
    <property type="project" value="UniProtKB-KW"/>
</dbReference>
<dbReference type="GO" id="GO:0004497">
    <property type="term" value="F:monooxygenase activity"/>
    <property type="evidence" value="ECO:0007669"/>
    <property type="project" value="UniProtKB-KW"/>
</dbReference>
<dbReference type="GO" id="GO:0030245">
    <property type="term" value="P:cellulose catabolic process"/>
    <property type="evidence" value="ECO:0007669"/>
    <property type="project" value="UniProtKB-KW"/>
</dbReference>
<dbReference type="CDD" id="cd21175">
    <property type="entry name" value="LPMO_AA9"/>
    <property type="match status" value="1"/>
</dbReference>
<dbReference type="Gene3D" id="2.70.50.70">
    <property type="match status" value="1"/>
</dbReference>
<dbReference type="InterPro" id="IPR049892">
    <property type="entry name" value="AA9"/>
</dbReference>
<dbReference type="InterPro" id="IPR005103">
    <property type="entry name" value="AA9_LPMO"/>
</dbReference>
<dbReference type="PANTHER" id="PTHR33353:SF17">
    <property type="entry name" value="ENDO-BETA-1,4-GLUCANASE D"/>
    <property type="match status" value="1"/>
</dbReference>
<dbReference type="PANTHER" id="PTHR33353">
    <property type="entry name" value="PUTATIVE (AFU_ORTHOLOGUE AFUA_1G12560)-RELATED"/>
    <property type="match status" value="1"/>
</dbReference>
<dbReference type="Pfam" id="PF03443">
    <property type="entry name" value="AA9"/>
    <property type="match status" value="1"/>
</dbReference>
<protein>
    <recommendedName>
        <fullName evidence="7">AA9 family lytic polysaccharide monooxygenase A</fullName>
        <shortName evidence="7">PcaAA9A</shortName>
        <ecNumber evidence="6">1.14.99.56</ecNumber>
    </recommendedName>
    <alternativeName>
        <fullName evidence="8">Cellulase AA9A</fullName>
    </alternativeName>
    <alternativeName>
        <fullName evidence="8">Endo-beta-1,4-glucanase AA9A</fullName>
        <shortName evidence="8">Endoglucanase AA9A</shortName>
    </alternativeName>
    <alternativeName>
        <fullName evidence="8">Glycosyl hydrolase 61 family protein AA9A</fullName>
    </alternativeName>
</protein>
<gene>
    <name evidence="7" type="primary">AA9A</name>
    <name type="ORF">PHACADRAFT_261448</name>
</gene>
<accession>K5VN09</accession>
<comment type="function">
    <text evidence="6">Lytic polysaccharide monooxygenase (LPMO) that depolymerizes crystalline and amorphous polysaccharides via the oxidation of scissile alpha- or beta-(1-4)-glycosidic bonds, yielding C4 oxidation products (PubMed:33199373). Catalysis by LPMOs requires the reduction of the active-site copper from Cu(II) to Cu(I) by a reducing agent and H(2)O(2) or O(2) as a cosubstrate (PubMed:33199373). Active on cellulose and cello-oligosaccharides, as well as plant cell wall-derived hemicellulosic polysaccharides (PubMed:33199373). Also active on cello-oligosaccharides such as cellohexaose, cellopentaose or cellotetraose (PubMed:33199373).</text>
</comment>
<comment type="catalytic activity">
    <reaction evidence="6">
        <text>[(1-&gt;4)-beta-D-glucosyl]n+m + reduced acceptor + O2 = 4-dehydro-beta-D-glucosyl-[(1-&gt;4)-beta-D-glucosyl]n-1 + [(1-&gt;4)-beta-D-glucosyl]m + acceptor + H2O.</text>
        <dbReference type="EC" id="1.14.99.56"/>
    </reaction>
</comment>
<comment type="cofactor">
    <cofactor evidence="3">
        <name>Cu(2+)</name>
        <dbReference type="ChEBI" id="CHEBI:29036"/>
    </cofactor>
    <text evidence="3">Binds 1 copper ion per subunit.</text>
</comment>
<comment type="subcellular location">
    <subcellularLocation>
        <location evidence="9">Secreted</location>
    </subcellularLocation>
</comment>
<comment type="biotechnology">
    <text evidence="3">Lignocellulose is the most abundant polymeric composite on Earth and is a recalcitrant but promising renewable substrate for industrial biotechnology applications. Together with cellobiose dehydrogenases (CDHs) an enzymatic system capable of oxidative cellulose cleavage is formed, which increases the efficiency of cellulases and put LPMOs at focus of biofuel research.</text>
</comment>
<comment type="similarity">
    <text evidence="8">Belongs to the polysaccharide monooxygenase AA9 family.</text>
</comment>
<evidence type="ECO:0000250" key="1">
    <source>
        <dbReference type="UniProtKB" id="A0A223GEC9"/>
    </source>
</evidence>
<evidence type="ECO:0000250" key="2">
    <source>
        <dbReference type="UniProtKB" id="Q1K8B6"/>
    </source>
</evidence>
<evidence type="ECO:0000250" key="3">
    <source>
        <dbReference type="UniProtKB" id="Q4WP32"/>
    </source>
</evidence>
<evidence type="ECO:0000255" key="4"/>
<evidence type="ECO:0000255" key="5">
    <source>
        <dbReference type="PROSITE-ProRule" id="PRU00498"/>
    </source>
</evidence>
<evidence type="ECO:0000269" key="6">
    <source>
    </source>
</evidence>
<evidence type="ECO:0000303" key="7">
    <source>
    </source>
</evidence>
<evidence type="ECO:0000305" key="8"/>
<evidence type="ECO:0000305" key="9">
    <source>
    </source>
</evidence>